<dbReference type="EC" id="6.3.4.16" evidence="1"/>
<dbReference type="EC" id="6.3.5.5" evidence="1"/>
<dbReference type="EMBL" id="CP000702">
    <property type="protein sequence ID" value="ABQ46391.1"/>
    <property type="molecule type" value="Genomic_DNA"/>
</dbReference>
<dbReference type="RefSeq" id="WP_011943024.1">
    <property type="nucleotide sequence ID" value="NC_009486.1"/>
</dbReference>
<dbReference type="SMR" id="A5IJL8"/>
<dbReference type="STRING" id="390874.Tpet_0363"/>
<dbReference type="KEGG" id="tpt:Tpet_0363"/>
<dbReference type="eggNOG" id="COG0458">
    <property type="taxonomic scope" value="Bacteria"/>
</dbReference>
<dbReference type="HOGENOM" id="CLU_000513_1_0_0"/>
<dbReference type="UniPathway" id="UPA00068">
    <property type="reaction ID" value="UER00171"/>
</dbReference>
<dbReference type="UniPathway" id="UPA00070">
    <property type="reaction ID" value="UER00115"/>
</dbReference>
<dbReference type="Proteomes" id="UP000006558">
    <property type="component" value="Chromosome"/>
</dbReference>
<dbReference type="GO" id="GO:0005737">
    <property type="term" value="C:cytoplasm"/>
    <property type="evidence" value="ECO:0007669"/>
    <property type="project" value="TreeGrafter"/>
</dbReference>
<dbReference type="GO" id="GO:0005524">
    <property type="term" value="F:ATP binding"/>
    <property type="evidence" value="ECO:0007669"/>
    <property type="project" value="UniProtKB-UniRule"/>
</dbReference>
<dbReference type="GO" id="GO:0004087">
    <property type="term" value="F:carbamoyl-phosphate synthase (ammonia) activity"/>
    <property type="evidence" value="ECO:0007669"/>
    <property type="project" value="RHEA"/>
</dbReference>
<dbReference type="GO" id="GO:0004088">
    <property type="term" value="F:carbamoyl-phosphate synthase (glutamine-hydrolyzing) activity"/>
    <property type="evidence" value="ECO:0007669"/>
    <property type="project" value="UniProtKB-UniRule"/>
</dbReference>
<dbReference type="GO" id="GO:0046872">
    <property type="term" value="F:metal ion binding"/>
    <property type="evidence" value="ECO:0007669"/>
    <property type="project" value="UniProtKB-KW"/>
</dbReference>
<dbReference type="GO" id="GO:0044205">
    <property type="term" value="P:'de novo' UMP biosynthetic process"/>
    <property type="evidence" value="ECO:0007669"/>
    <property type="project" value="UniProtKB-UniRule"/>
</dbReference>
<dbReference type="GO" id="GO:0006541">
    <property type="term" value="P:glutamine metabolic process"/>
    <property type="evidence" value="ECO:0007669"/>
    <property type="project" value="TreeGrafter"/>
</dbReference>
<dbReference type="GO" id="GO:0006526">
    <property type="term" value="P:L-arginine biosynthetic process"/>
    <property type="evidence" value="ECO:0007669"/>
    <property type="project" value="UniProtKB-UniRule"/>
</dbReference>
<dbReference type="CDD" id="cd01424">
    <property type="entry name" value="MGS_CPS_II"/>
    <property type="match status" value="1"/>
</dbReference>
<dbReference type="FunFam" id="1.10.1030.10:FF:000002">
    <property type="entry name" value="Carbamoyl-phosphate synthase large chain"/>
    <property type="match status" value="1"/>
</dbReference>
<dbReference type="FunFam" id="3.30.1490.20:FF:000001">
    <property type="entry name" value="Carbamoyl-phosphate synthase large chain"/>
    <property type="match status" value="1"/>
</dbReference>
<dbReference type="FunFam" id="3.30.470.20:FF:000007">
    <property type="entry name" value="Carbamoyl-phosphate synthase large chain"/>
    <property type="match status" value="1"/>
</dbReference>
<dbReference type="FunFam" id="3.30.470.20:FF:000026">
    <property type="entry name" value="Carbamoyl-phosphate synthase large chain"/>
    <property type="match status" value="1"/>
</dbReference>
<dbReference type="FunFam" id="3.40.50.20:FF:000001">
    <property type="entry name" value="Carbamoyl-phosphate synthase large chain"/>
    <property type="match status" value="1"/>
</dbReference>
<dbReference type="FunFam" id="3.40.50.20:FF:000003">
    <property type="entry name" value="Carbamoyl-phosphate synthase large chain"/>
    <property type="match status" value="1"/>
</dbReference>
<dbReference type="Gene3D" id="3.40.50.20">
    <property type="match status" value="2"/>
</dbReference>
<dbReference type="Gene3D" id="3.30.1490.20">
    <property type="entry name" value="ATP-grasp fold, A domain"/>
    <property type="match status" value="1"/>
</dbReference>
<dbReference type="Gene3D" id="3.30.470.20">
    <property type="entry name" value="ATP-grasp fold, B domain"/>
    <property type="match status" value="2"/>
</dbReference>
<dbReference type="Gene3D" id="1.10.1030.10">
    <property type="entry name" value="Carbamoyl-phosphate synthetase, large subunit oligomerisation domain"/>
    <property type="match status" value="1"/>
</dbReference>
<dbReference type="Gene3D" id="3.40.50.1380">
    <property type="entry name" value="Methylglyoxal synthase-like domain"/>
    <property type="match status" value="1"/>
</dbReference>
<dbReference type="HAMAP" id="MF_01210_A">
    <property type="entry name" value="CPSase_L_chain_A"/>
    <property type="match status" value="1"/>
</dbReference>
<dbReference type="HAMAP" id="MF_01210_B">
    <property type="entry name" value="CPSase_L_chain_B"/>
    <property type="match status" value="1"/>
</dbReference>
<dbReference type="InterPro" id="IPR011761">
    <property type="entry name" value="ATP-grasp"/>
</dbReference>
<dbReference type="InterPro" id="IPR013815">
    <property type="entry name" value="ATP_grasp_subdomain_1"/>
</dbReference>
<dbReference type="InterPro" id="IPR006275">
    <property type="entry name" value="CarbamoylP_synth_lsu"/>
</dbReference>
<dbReference type="InterPro" id="IPR005480">
    <property type="entry name" value="CarbamoylP_synth_lsu_oligo"/>
</dbReference>
<dbReference type="InterPro" id="IPR036897">
    <property type="entry name" value="CarbamoylP_synth_lsu_oligo_sf"/>
</dbReference>
<dbReference type="InterPro" id="IPR005479">
    <property type="entry name" value="CbamoylP_synth_lsu-like_ATP-bd"/>
</dbReference>
<dbReference type="InterPro" id="IPR005483">
    <property type="entry name" value="CbamoylP_synth_lsu_CPSase_dom"/>
</dbReference>
<dbReference type="InterPro" id="IPR011607">
    <property type="entry name" value="MGS-like_dom"/>
</dbReference>
<dbReference type="InterPro" id="IPR036914">
    <property type="entry name" value="MGS-like_dom_sf"/>
</dbReference>
<dbReference type="InterPro" id="IPR033937">
    <property type="entry name" value="MGS_CPS_CarB"/>
</dbReference>
<dbReference type="InterPro" id="IPR016185">
    <property type="entry name" value="PreATP-grasp_dom_sf"/>
</dbReference>
<dbReference type="NCBIfam" id="TIGR01369">
    <property type="entry name" value="CPSaseII_lrg"/>
    <property type="match status" value="1"/>
</dbReference>
<dbReference type="NCBIfam" id="NF003671">
    <property type="entry name" value="PRK05294.1"/>
    <property type="match status" value="1"/>
</dbReference>
<dbReference type="NCBIfam" id="NF009455">
    <property type="entry name" value="PRK12815.1"/>
    <property type="match status" value="1"/>
</dbReference>
<dbReference type="PANTHER" id="PTHR11405:SF53">
    <property type="entry name" value="CARBAMOYL-PHOSPHATE SYNTHASE [AMMONIA], MITOCHONDRIAL"/>
    <property type="match status" value="1"/>
</dbReference>
<dbReference type="PANTHER" id="PTHR11405">
    <property type="entry name" value="CARBAMOYLTRANSFERASE FAMILY MEMBER"/>
    <property type="match status" value="1"/>
</dbReference>
<dbReference type="Pfam" id="PF02786">
    <property type="entry name" value="CPSase_L_D2"/>
    <property type="match status" value="2"/>
</dbReference>
<dbReference type="Pfam" id="PF02787">
    <property type="entry name" value="CPSase_L_D3"/>
    <property type="match status" value="1"/>
</dbReference>
<dbReference type="Pfam" id="PF02142">
    <property type="entry name" value="MGS"/>
    <property type="match status" value="1"/>
</dbReference>
<dbReference type="PRINTS" id="PR00098">
    <property type="entry name" value="CPSASE"/>
</dbReference>
<dbReference type="SMART" id="SM01096">
    <property type="entry name" value="CPSase_L_D3"/>
    <property type="match status" value="1"/>
</dbReference>
<dbReference type="SMART" id="SM00851">
    <property type="entry name" value="MGS"/>
    <property type="match status" value="1"/>
</dbReference>
<dbReference type="SUPFAM" id="SSF48108">
    <property type="entry name" value="Carbamoyl phosphate synthetase, large subunit connection domain"/>
    <property type="match status" value="1"/>
</dbReference>
<dbReference type="SUPFAM" id="SSF56059">
    <property type="entry name" value="Glutathione synthetase ATP-binding domain-like"/>
    <property type="match status" value="2"/>
</dbReference>
<dbReference type="SUPFAM" id="SSF52335">
    <property type="entry name" value="Methylglyoxal synthase-like"/>
    <property type="match status" value="1"/>
</dbReference>
<dbReference type="SUPFAM" id="SSF52440">
    <property type="entry name" value="PreATP-grasp domain"/>
    <property type="match status" value="2"/>
</dbReference>
<dbReference type="PROSITE" id="PS50975">
    <property type="entry name" value="ATP_GRASP"/>
    <property type="match status" value="2"/>
</dbReference>
<dbReference type="PROSITE" id="PS00866">
    <property type="entry name" value="CPSASE_1"/>
    <property type="match status" value="2"/>
</dbReference>
<dbReference type="PROSITE" id="PS00867">
    <property type="entry name" value="CPSASE_2"/>
    <property type="match status" value="2"/>
</dbReference>
<dbReference type="PROSITE" id="PS51855">
    <property type="entry name" value="MGS"/>
    <property type="match status" value="1"/>
</dbReference>
<accession>A5IJL8</accession>
<keyword id="KW-0028">Amino-acid biosynthesis</keyword>
<keyword id="KW-0055">Arginine biosynthesis</keyword>
<keyword id="KW-0067">ATP-binding</keyword>
<keyword id="KW-0436">Ligase</keyword>
<keyword id="KW-0460">Magnesium</keyword>
<keyword id="KW-0464">Manganese</keyword>
<keyword id="KW-0479">Metal-binding</keyword>
<keyword id="KW-0547">Nucleotide-binding</keyword>
<keyword id="KW-0665">Pyrimidine biosynthesis</keyword>
<keyword id="KW-0677">Repeat</keyword>
<feature type="chain" id="PRO_1000066392" description="Carbamoyl phosphate synthase large chain">
    <location>
        <begin position="1"/>
        <end position="1099"/>
    </location>
</feature>
<feature type="domain" description="ATP-grasp 1" evidence="1">
    <location>
        <begin position="133"/>
        <end position="328"/>
    </location>
</feature>
<feature type="domain" description="ATP-grasp 2" evidence="1">
    <location>
        <begin position="666"/>
        <end position="857"/>
    </location>
</feature>
<feature type="domain" description="MGS-like" evidence="1">
    <location>
        <begin position="945"/>
        <end position="1099"/>
    </location>
</feature>
<feature type="region of interest" description="Carboxyphosphate synthetic domain" evidence="1">
    <location>
        <begin position="1"/>
        <end position="402"/>
    </location>
</feature>
<feature type="region of interest" description="Oligomerization domain" evidence="1">
    <location>
        <begin position="403"/>
        <end position="541"/>
    </location>
</feature>
<feature type="region of interest" description="Carbamoyl phosphate synthetic domain" evidence="1">
    <location>
        <begin position="542"/>
        <end position="944"/>
    </location>
</feature>
<feature type="region of interest" description="Allosteric domain" evidence="1">
    <location>
        <begin position="945"/>
        <end position="1099"/>
    </location>
</feature>
<feature type="binding site" evidence="1">
    <location>
        <position position="129"/>
    </location>
    <ligand>
        <name>ATP</name>
        <dbReference type="ChEBI" id="CHEBI:30616"/>
        <label>1</label>
    </ligand>
</feature>
<feature type="binding site" evidence="1">
    <location>
        <position position="169"/>
    </location>
    <ligand>
        <name>ATP</name>
        <dbReference type="ChEBI" id="CHEBI:30616"/>
        <label>1</label>
    </ligand>
</feature>
<feature type="binding site" evidence="1">
    <location>
        <position position="175"/>
    </location>
    <ligand>
        <name>ATP</name>
        <dbReference type="ChEBI" id="CHEBI:30616"/>
        <label>1</label>
    </ligand>
</feature>
<feature type="binding site" evidence="1">
    <location>
        <position position="176"/>
    </location>
    <ligand>
        <name>ATP</name>
        <dbReference type="ChEBI" id="CHEBI:30616"/>
        <label>1</label>
    </ligand>
</feature>
<feature type="binding site" evidence="1">
    <location>
        <position position="208"/>
    </location>
    <ligand>
        <name>ATP</name>
        <dbReference type="ChEBI" id="CHEBI:30616"/>
        <label>1</label>
    </ligand>
</feature>
<feature type="binding site" evidence="1">
    <location>
        <position position="210"/>
    </location>
    <ligand>
        <name>ATP</name>
        <dbReference type="ChEBI" id="CHEBI:30616"/>
        <label>1</label>
    </ligand>
</feature>
<feature type="binding site" evidence="1">
    <location>
        <position position="215"/>
    </location>
    <ligand>
        <name>ATP</name>
        <dbReference type="ChEBI" id="CHEBI:30616"/>
        <label>1</label>
    </ligand>
</feature>
<feature type="binding site" evidence="1">
    <location>
        <position position="241"/>
    </location>
    <ligand>
        <name>ATP</name>
        <dbReference type="ChEBI" id="CHEBI:30616"/>
        <label>1</label>
    </ligand>
</feature>
<feature type="binding site" evidence="1">
    <location>
        <position position="242"/>
    </location>
    <ligand>
        <name>ATP</name>
        <dbReference type="ChEBI" id="CHEBI:30616"/>
        <label>1</label>
    </ligand>
</feature>
<feature type="binding site" evidence="1">
    <location>
        <position position="243"/>
    </location>
    <ligand>
        <name>ATP</name>
        <dbReference type="ChEBI" id="CHEBI:30616"/>
        <label>1</label>
    </ligand>
</feature>
<feature type="binding site" evidence="1">
    <location>
        <position position="285"/>
    </location>
    <ligand>
        <name>ATP</name>
        <dbReference type="ChEBI" id="CHEBI:30616"/>
        <label>1</label>
    </ligand>
</feature>
<feature type="binding site" evidence="1">
    <location>
        <position position="285"/>
    </location>
    <ligand>
        <name>Mg(2+)</name>
        <dbReference type="ChEBI" id="CHEBI:18420"/>
        <label>1</label>
    </ligand>
</feature>
<feature type="binding site" evidence="1">
    <location>
        <position position="285"/>
    </location>
    <ligand>
        <name>Mn(2+)</name>
        <dbReference type="ChEBI" id="CHEBI:29035"/>
        <label>1</label>
    </ligand>
</feature>
<feature type="binding site" evidence="1">
    <location>
        <position position="299"/>
    </location>
    <ligand>
        <name>ATP</name>
        <dbReference type="ChEBI" id="CHEBI:30616"/>
        <label>1</label>
    </ligand>
</feature>
<feature type="binding site" evidence="1">
    <location>
        <position position="299"/>
    </location>
    <ligand>
        <name>Mg(2+)</name>
        <dbReference type="ChEBI" id="CHEBI:18420"/>
        <label>1</label>
    </ligand>
</feature>
<feature type="binding site" evidence="1">
    <location>
        <position position="299"/>
    </location>
    <ligand>
        <name>Mg(2+)</name>
        <dbReference type="ChEBI" id="CHEBI:18420"/>
        <label>2</label>
    </ligand>
</feature>
<feature type="binding site" evidence="1">
    <location>
        <position position="299"/>
    </location>
    <ligand>
        <name>Mn(2+)</name>
        <dbReference type="ChEBI" id="CHEBI:29035"/>
        <label>1</label>
    </ligand>
</feature>
<feature type="binding site" evidence="1">
    <location>
        <position position="299"/>
    </location>
    <ligand>
        <name>Mn(2+)</name>
        <dbReference type="ChEBI" id="CHEBI:29035"/>
        <label>2</label>
    </ligand>
</feature>
<feature type="binding site" evidence="1">
    <location>
        <position position="301"/>
    </location>
    <ligand>
        <name>Mg(2+)</name>
        <dbReference type="ChEBI" id="CHEBI:18420"/>
        <label>2</label>
    </ligand>
</feature>
<feature type="binding site" evidence="1">
    <location>
        <position position="301"/>
    </location>
    <ligand>
        <name>Mn(2+)</name>
        <dbReference type="ChEBI" id="CHEBI:29035"/>
        <label>2</label>
    </ligand>
</feature>
<feature type="binding site" evidence="1">
    <location>
        <position position="702"/>
    </location>
    <ligand>
        <name>ATP</name>
        <dbReference type="ChEBI" id="CHEBI:30616"/>
        <label>2</label>
    </ligand>
</feature>
<feature type="binding site" evidence="1">
    <location>
        <position position="741"/>
    </location>
    <ligand>
        <name>ATP</name>
        <dbReference type="ChEBI" id="CHEBI:30616"/>
        <label>2</label>
    </ligand>
</feature>
<feature type="binding site" evidence="1">
    <location>
        <position position="743"/>
    </location>
    <ligand>
        <name>ATP</name>
        <dbReference type="ChEBI" id="CHEBI:30616"/>
        <label>2</label>
    </ligand>
</feature>
<feature type="binding site" evidence="1">
    <location>
        <position position="748"/>
    </location>
    <ligand>
        <name>ATP</name>
        <dbReference type="ChEBI" id="CHEBI:30616"/>
        <label>2</label>
    </ligand>
</feature>
<feature type="binding site" evidence="1">
    <location>
        <position position="773"/>
    </location>
    <ligand>
        <name>ATP</name>
        <dbReference type="ChEBI" id="CHEBI:30616"/>
        <label>2</label>
    </ligand>
</feature>
<feature type="binding site" evidence="1">
    <location>
        <position position="774"/>
    </location>
    <ligand>
        <name>ATP</name>
        <dbReference type="ChEBI" id="CHEBI:30616"/>
        <label>2</label>
    </ligand>
</feature>
<feature type="binding site" evidence="1">
    <location>
        <position position="775"/>
    </location>
    <ligand>
        <name>ATP</name>
        <dbReference type="ChEBI" id="CHEBI:30616"/>
        <label>2</label>
    </ligand>
</feature>
<feature type="binding site" evidence="1">
    <location>
        <position position="776"/>
    </location>
    <ligand>
        <name>ATP</name>
        <dbReference type="ChEBI" id="CHEBI:30616"/>
        <label>2</label>
    </ligand>
</feature>
<feature type="binding site" evidence="1">
    <location>
        <position position="816"/>
    </location>
    <ligand>
        <name>ATP</name>
        <dbReference type="ChEBI" id="CHEBI:30616"/>
        <label>2</label>
    </ligand>
</feature>
<feature type="binding site" evidence="1">
    <location>
        <position position="816"/>
    </location>
    <ligand>
        <name>Mg(2+)</name>
        <dbReference type="ChEBI" id="CHEBI:18420"/>
        <label>3</label>
    </ligand>
</feature>
<feature type="binding site" evidence="1">
    <location>
        <position position="816"/>
    </location>
    <ligand>
        <name>Mn(2+)</name>
        <dbReference type="ChEBI" id="CHEBI:29035"/>
        <label>3</label>
    </ligand>
</feature>
<feature type="binding site" evidence="1">
    <location>
        <position position="828"/>
    </location>
    <ligand>
        <name>ATP</name>
        <dbReference type="ChEBI" id="CHEBI:30616"/>
        <label>2</label>
    </ligand>
</feature>
<feature type="binding site" evidence="1">
    <location>
        <position position="828"/>
    </location>
    <ligand>
        <name>Mg(2+)</name>
        <dbReference type="ChEBI" id="CHEBI:18420"/>
        <label>3</label>
    </ligand>
</feature>
<feature type="binding site" evidence="1">
    <location>
        <position position="828"/>
    </location>
    <ligand>
        <name>Mg(2+)</name>
        <dbReference type="ChEBI" id="CHEBI:18420"/>
        <label>4</label>
    </ligand>
</feature>
<feature type="binding site" evidence="1">
    <location>
        <position position="828"/>
    </location>
    <ligand>
        <name>Mn(2+)</name>
        <dbReference type="ChEBI" id="CHEBI:29035"/>
        <label>3</label>
    </ligand>
</feature>
<feature type="binding site" evidence="1">
    <location>
        <position position="828"/>
    </location>
    <ligand>
        <name>Mn(2+)</name>
        <dbReference type="ChEBI" id="CHEBI:29035"/>
        <label>4</label>
    </ligand>
</feature>
<feature type="binding site" evidence="1">
    <location>
        <position position="830"/>
    </location>
    <ligand>
        <name>Mg(2+)</name>
        <dbReference type="ChEBI" id="CHEBI:18420"/>
        <label>4</label>
    </ligand>
</feature>
<feature type="binding site" evidence="1">
    <location>
        <position position="830"/>
    </location>
    <ligand>
        <name>Mn(2+)</name>
        <dbReference type="ChEBI" id="CHEBI:29035"/>
        <label>4</label>
    </ligand>
</feature>
<gene>
    <name evidence="1" type="primary">carB</name>
    <name type="ordered locus">Tpet_0363</name>
</gene>
<proteinExistence type="inferred from homology"/>
<name>CARB_THEP1</name>
<reference key="1">
    <citation type="submission" date="2007-05" db="EMBL/GenBank/DDBJ databases">
        <title>Complete sequence of Thermotoga petrophila RKU-1.</title>
        <authorList>
            <consortium name="US DOE Joint Genome Institute"/>
            <person name="Copeland A."/>
            <person name="Lucas S."/>
            <person name="Lapidus A."/>
            <person name="Barry K."/>
            <person name="Glavina del Rio T."/>
            <person name="Dalin E."/>
            <person name="Tice H."/>
            <person name="Pitluck S."/>
            <person name="Sims D."/>
            <person name="Brettin T."/>
            <person name="Bruce D."/>
            <person name="Detter J.C."/>
            <person name="Han C."/>
            <person name="Tapia R."/>
            <person name="Schmutz J."/>
            <person name="Larimer F."/>
            <person name="Land M."/>
            <person name="Hauser L."/>
            <person name="Kyrpides N."/>
            <person name="Mikhailova N."/>
            <person name="Nelson K."/>
            <person name="Gogarten J.P."/>
            <person name="Noll K."/>
            <person name="Richardson P."/>
        </authorList>
    </citation>
    <scope>NUCLEOTIDE SEQUENCE [LARGE SCALE GENOMIC DNA]</scope>
    <source>
        <strain>ATCC BAA-488 / DSM 13995 / JCM 10881 / RKU-1</strain>
    </source>
</reference>
<sequence length="1099" mass="121361">MPKREDIKRILVIGSGPITIGQAAEFDYSGTQALKALKSAGYEVIIVNSNSATIMTDPEFSDAVYIEPLTVEFLEKIIEKERPDALLPTLGGQTALNLAVELAERGILDKYGVQLIGAKLESIKKAEDRELFKETMEKAGLEVLRSRLVNNLADALETAREFGYPVIIRPSFTLGGTGGGIAFNEEELRDIVTKGLIESPVHTVLIEESVLGWKEYELEVVRDGAGNFIVVCSIENLDPMGIHTGDSITVAPAQTLTDVEYQRMRDAAYKVIDAIGIETGGSNIQFALDPETGRMVVIEMNPRVSRSSALASKATGYPIAKVAALLAVGFTLDEIPNYITGKTMAAFEPSIDYVVVKIPRFQLEKFPGADPRLNTQMKSVGEVMAIGRTFKEALGKALRSLELDAAPKLDLEHIREHLANPTPERISYVFAAFRNGMDVEEVHELTKIDRWFLREMKACIELEEELKLKKFDVEILKKAKQWGYSDREIAEIWGVSEKEIRKMREDNRIFPVYKMVDTCAAEFEAQTPYYYSTYNGVENEAVPSDREKIMILGSGPNRIGQGIEFDYTNVHGVWSFQEEGYETIMVNSNPETVSTDYDTSDRLYFEPLTVEDVLEIVRNEKPKGVVVAFGGQTPLKIAKYLVEEKVNIIGTSFESIEIAEDREKFAKLLKQIGLKCPPFGTASSVEEALRVAENLGYPVLVRPSYVLGGRAMAIVDTPQELEMYVKEAAVVSPGYPVLIDKFLEDAIELDVDVVSDGKYVWIAGLMEQIEEAGVHSGDSACVLPPVSLSEKLVEEIEETVYKLVKALKIVGVANIQLAVKDEEIYIIEANPRASRTVPFVSKAIGIPVARIAAKIMVGRNLPELLSEYFPYPTRPGVKVDKLDESEILPTPWPKMFSVKEVVIPFHKFPGTDVLLGPEMRSTGEVMGIGEDFAEAFAKAQIAAGNPLPTTGAILATVADKDKREAVPLLAHLADMGFEIYATRGTAKALQSHGVEVKVVPKVGEGRPDVIDLLEQGKISLVVITQSSDEPALVAVSHGKEPFKVEGRRTVGYMIRTTALKRKIPYLTTVESLRAAVAAIRKMKKGSIVKVRRLTDTWKM</sequence>
<protein>
    <recommendedName>
        <fullName evidence="1">Carbamoyl phosphate synthase large chain</fullName>
        <ecNumber evidence="1">6.3.4.16</ecNumber>
        <ecNumber evidence="1">6.3.5.5</ecNumber>
    </recommendedName>
    <alternativeName>
        <fullName evidence="1">Carbamoyl phosphate synthetase ammonia chain</fullName>
    </alternativeName>
</protein>
<organism>
    <name type="scientific">Thermotoga petrophila (strain ATCC BAA-488 / DSM 13995 / JCM 10881 / RKU-1)</name>
    <dbReference type="NCBI Taxonomy" id="390874"/>
    <lineage>
        <taxon>Bacteria</taxon>
        <taxon>Thermotogati</taxon>
        <taxon>Thermotogota</taxon>
        <taxon>Thermotogae</taxon>
        <taxon>Thermotogales</taxon>
        <taxon>Thermotogaceae</taxon>
        <taxon>Thermotoga</taxon>
    </lineage>
</organism>
<evidence type="ECO:0000255" key="1">
    <source>
        <dbReference type="HAMAP-Rule" id="MF_01210"/>
    </source>
</evidence>
<comment type="function">
    <text evidence="1">Large subunit of the glutamine-dependent carbamoyl phosphate synthetase (CPSase). CPSase catalyzes the formation of carbamoyl phosphate from the ammonia moiety of glutamine, carbonate, and phosphate donated by ATP, constituting the first step of 2 biosynthetic pathways, one leading to arginine and/or urea and the other to pyrimidine nucleotides. The large subunit (synthetase) binds the substrates ammonia (free or transferred from glutamine from the small subunit), hydrogencarbonate and ATP and carries out an ATP-coupled ligase reaction, activating hydrogencarbonate by forming carboxy phosphate which reacts with ammonia to form carbamoyl phosphate.</text>
</comment>
<comment type="catalytic activity">
    <reaction evidence="1">
        <text>hydrogencarbonate + L-glutamine + 2 ATP + H2O = carbamoyl phosphate + L-glutamate + 2 ADP + phosphate + 2 H(+)</text>
        <dbReference type="Rhea" id="RHEA:18633"/>
        <dbReference type="ChEBI" id="CHEBI:15377"/>
        <dbReference type="ChEBI" id="CHEBI:15378"/>
        <dbReference type="ChEBI" id="CHEBI:17544"/>
        <dbReference type="ChEBI" id="CHEBI:29985"/>
        <dbReference type="ChEBI" id="CHEBI:30616"/>
        <dbReference type="ChEBI" id="CHEBI:43474"/>
        <dbReference type="ChEBI" id="CHEBI:58228"/>
        <dbReference type="ChEBI" id="CHEBI:58359"/>
        <dbReference type="ChEBI" id="CHEBI:456216"/>
        <dbReference type="EC" id="6.3.5.5"/>
    </reaction>
</comment>
<comment type="catalytic activity">
    <molecule>Carbamoyl phosphate synthase large chain</molecule>
    <reaction evidence="1">
        <text>hydrogencarbonate + NH4(+) + 2 ATP = carbamoyl phosphate + 2 ADP + phosphate + 2 H(+)</text>
        <dbReference type="Rhea" id="RHEA:18029"/>
        <dbReference type="ChEBI" id="CHEBI:15378"/>
        <dbReference type="ChEBI" id="CHEBI:17544"/>
        <dbReference type="ChEBI" id="CHEBI:28938"/>
        <dbReference type="ChEBI" id="CHEBI:30616"/>
        <dbReference type="ChEBI" id="CHEBI:43474"/>
        <dbReference type="ChEBI" id="CHEBI:58228"/>
        <dbReference type="ChEBI" id="CHEBI:456216"/>
        <dbReference type="EC" id="6.3.4.16"/>
    </reaction>
</comment>
<comment type="cofactor">
    <cofactor evidence="1">
        <name>Mg(2+)</name>
        <dbReference type="ChEBI" id="CHEBI:18420"/>
    </cofactor>
    <cofactor evidence="1">
        <name>Mn(2+)</name>
        <dbReference type="ChEBI" id="CHEBI:29035"/>
    </cofactor>
    <text evidence="1">Binds 4 Mg(2+) or Mn(2+) ions per subunit.</text>
</comment>
<comment type="pathway">
    <text evidence="1">Amino-acid biosynthesis; L-arginine biosynthesis; carbamoyl phosphate from bicarbonate: step 1/1.</text>
</comment>
<comment type="pathway">
    <text evidence="1">Pyrimidine metabolism; UMP biosynthesis via de novo pathway; (S)-dihydroorotate from bicarbonate: step 1/3.</text>
</comment>
<comment type="subunit">
    <text evidence="1">Composed of two chains; the small (or glutamine) chain promotes the hydrolysis of glutamine to ammonia, which is used by the large (or ammonia) chain to synthesize carbamoyl phosphate. Tetramer of heterodimers (alpha,beta)4.</text>
</comment>
<comment type="domain">
    <text evidence="1">The large subunit is composed of 2 ATP-grasp domains that are involved in binding the 2 ATP molecules needed for carbamoyl phosphate synthesis. The N-terminal ATP-grasp domain (referred to as the carboxyphosphate synthetic component) catalyzes the ATP-dependent phosphorylation of hydrogencarbonate to carboxyphosphate and the subsequent nucleophilic attack by ammonia to form a carbamate intermediate. The C-terminal ATP-grasp domain (referred to as the carbamoyl phosphate synthetic component) then catalyzes the phosphorylation of carbamate with the second ATP to form the end product carbamoyl phosphate. The reactive and unstable enzyme intermediates are sequentially channeled from one active site to the next through the interior of the protein over a distance of at least 96 A.</text>
</comment>
<comment type="similarity">
    <text evidence="1">Belongs to the CarB family.</text>
</comment>